<comment type="function">
    <text evidence="1">Specifically methylates the guanosine in position 1516 of 16S rRNA.</text>
</comment>
<comment type="catalytic activity">
    <reaction evidence="1">
        <text>guanosine(1516) in 16S rRNA + S-adenosyl-L-methionine = N(2)-methylguanosine(1516) in 16S rRNA + S-adenosyl-L-homocysteine + H(+)</text>
        <dbReference type="Rhea" id="RHEA:43220"/>
        <dbReference type="Rhea" id="RHEA-COMP:10412"/>
        <dbReference type="Rhea" id="RHEA-COMP:10413"/>
        <dbReference type="ChEBI" id="CHEBI:15378"/>
        <dbReference type="ChEBI" id="CHEBI:57856"/>
        <dbReference type="ChEBI" id="CHEBI:59789"/>
        <dbReference type="ChEBI" id="CHEBI:74269"/>
        <dbReference type="ChEBI" id="CHEBI:74481"/>
        <dbReference type="EC" id="2.1.1.242"/>
    </reaction>
</comment>
<comment type="subcellular location">
    <subcellularLocation>
        <location evidence="1">Cytoplasm</location>
    </subcellularLocation>
</comment>
<comment type="similarity">
    <text evidence="1">Belongs to the methyltransferase superfamily. RsmJ family.</text>
</comment>
<gene>
    <name evidence="1" type="primary">rsmJ</name>
    <name type="ordered locus">Csal_0860</name>
</gene>
<organism>
    <name type="scientific">Chromohalobacter salexigens (strain ATCC BAA-138 / DSM 3043 / CIP 106854 / NCIMB 13768 / 1H11)</name>
    <dbReference type="NCBI Taxonomy" id="290398"/>
    <lineage>
        <taxon>Bacteria</taxon>
        <taxon>Pseudomonadati</taxon>
        <taxon>Pseudomonadota</taxon>
        <taxon>Gammaproteobacteria</taxon>
        <taxon>Oceanospirillales</taxon>
        <taxon>Halomonadaceae</taxon>
        <taxon>Chromohalobacter</taxon>
    </lineage>
</organism>
<evidence type="ECO:0000255" key="1">
    <source>
        <dbReference type="HAMAP-Rule" id="MF_01523"/>
    </source>
</evidence>
<name>RSMJ_CHRSD</name>
<reference key="1">
    <citation type="journal article" date="2011" name="Stand. Genomic Sci.">
        <title>Complete genome sequence of the halophilic and highly halotolerant Chromohalobacter salexigens type strain (1H11(T)).</title>
        <authorList>
            <person name="Copeland A."/>
            <person name="O'Connor K."/>
            <person name="Lucas S."/>
            <person name="Lapidus A."/>
            <person name="Berry K.W."/>
            <person name="Detter J.C."/>
            <person name="Del Rio T.G."/>
            <person name="Hammon N."/>
            <person name="Dalin E."/>
            <person name="Tice H."/>
            <person name="Pitluck S."/>
            <person name="Bruce D."/>
            <person name="Goodwin L."/>
            <person name="Han C."/>
            <person name="Tapia R."/>
            <person name="Saunders E."/>
            <person name="Schmutz J."/>
            <person name="Brettin T."/>
            <person name="Larimer F."/>
            <person name="Land M."/>
            <person name="Hauser L."/>
            <person name="Vargas C."/>
            <person name="Nieto J.J."/>
            <person name="Kyrpides N.C."/>
            <person name="Ivanova N."/>
            <person name="Goker M."/>
            <person name="Klenk H.P."/>
            <person name="Csonka L.N."/>
            <person name="Woyke T."/>
        </authorList>
    </citation>
    <scope>NUCLEOTIDE SEQUENCE [LARGE SCALE GENOMIC DNA]</scope>
    <source>
        <strain>ATCC BAA-138 / DSM 3043 / CIP 106854 / NCIMB 13768 / 1H11</strain>
    </source>
</reference>
<protein>
    <recommendedName>
        <fullName evidence="1">Ribosomal RNA small subunit methyltransferase J</fullName>
        <ecNumber evidence="1">2.1.1.242</ecNumber>
    </recommendedName>
    <alternativeName>
        <fullName evidence="1">16S rRNA m2G1516 methyltransferase</fullName>
    </alternativeName>
    <alternativeName>
        <fullName evidence="1">rRNA (guanine-N(2)-)-methyltransferase</fullName>
    </alternativeName>
</protein>
<accession>Q1QZ91</accession>
<sequence length="256" mass="27298">MSDAVVAVGEPLRDLAARLGLAWQAEGDATAALRLAMTPEGLALSGEARHYGAPIRVDFTAGKAAHRRRFGGGRGQLVAKACGLARGVTPSIVDATAGLGRDAFVLATLGAEVLLIERVAAIYALLEDGLGRASANAETAEIAARMRVAQGDAARELASLVARHDIAPQVVHLDPMFPHRDKSALVKKEMRVFRDLAGDDDDAPRLLEAALDVASHRVVVKRPRRAPPIEGPAPHHMLEGKTSRYDLYVHRSLKPE</sequence>
<proteinExistence type="inferred from homology"/>
<dbReference type="EC" id="2.1.1.242" evidence="1"/>
<dbReference type="EMBL" id="CP000285">
    <property type="protein sequence ID" value="ABE58217.1"/>
    <property type="molecule type" value="Genomic_DNA"/>
</dbReference>
<dbReference type="RefSeq" id="WP_011506163.1">
    <property type="nucleotide sequence ID" value="NC_007963.1"/>
</dbReference>
<dbReference type="SMR" id="Q1QZ91"/>
<dbReference type="STRING" id="290398.Csal_0860"/>
<dbReference type="GeneID" id="95333609"/>
<dbReference type="KEGG" id="csa:Csal_0860"/>
<dbReference type="eggNOG" id="COG0742">
    <property type="taxonomic scope" value="Bacteria"/>
</dbReference>
<dbReference type="HOGENOM" id="CLU_076324_1_0_6"/>
<dbReference type="OrthoDB" id="3191794at2"/>
<dbReference type="Proteomes" id="UP000000239">
    <property type="component" value="Chromosome"/>
</dbReference>
<dbReference type="GO" id="GO:0005737">
    <property type="term" value="C:cytoplasm"/>
    <property type="evidence" value="ECO:0007669"/>
    <property type="project" value="UniProtKB-SubCell"/>
</dbReference>
<dbReference type="GO" id="GO:0008990">
    <property type="term" value="F:rRNA (guanine-N2-)-methyltransferase activity"/>
    <property type="evidence" value="ECO:0007669"/>
    <property type="project" value="UniProtKB-UniRule"/>
</dbReference>
<dbReference type="Gene3D" id="3.40.50.150">
    <property type="entry name" value="Vaccinia Virus protein VP39"/>
    <property type="match status" value="1"/>
</dbReference>
<dbReference type="HAMAP" id="MF_01523">
    <property type="entry name" value="16SrRNA_methyltr_J"/>
    <property type="match status" value="1"/>
</dbReference>
<dbReference type="InterPro" id="IPR007536">
    <property type="entry name" value="16SrRNA_methylTrfase_J"/>
</dbReference>
<dbReference type="InterPro" id="IPR029063">
    <property type="entry name" value="SAM-dependent_MTases_sf"/>
</dbReference>
<dbReference type="PANTHER" id="PTHR36112">
    <property type="entry name" value="RIBOSOMAL RNA SMALL SUBUNIT METHYLTRANSFERASE J"/>
    <property type="match status" value="1"/>
</dbReference>
<dbReference type="PANTHER" id="PTHR36112:SF1">
    <property type="entry name" value="RIBOSOMAL RNA SMALL SUBUNIT METHYLTRANSFERASE J"/>
    <property type="match status" value="1"/>
</dbReference>
<dbReference type="Pfam" id="PF04445">
    <property type="entry name" value="SAM_MT"/>
    <property type="match status" value="1"/>
</dbReference>
<dbReference type="SUPFAM" id="SSF53335">
    <property type="entry name" value="S-adenosyl-L-methionine-dependent methyltransferases"/>
    <property type="match status" value="1"/>
</dbReference>
<feature type="chain" id="PRO_0000292626" description="Ribosomal RNA small subunit methyltransferase J">
    <location>
        <begin position="1"/>
        <end position="256"/>
    </location>
</feature>
<feature type="binding site" evidence="1">
    <location>
        <begin position="101"/>
        <end position="102"/>
    </location>
    <ligand>
        <name>S-adenosyl-L-methionine</name>
        <dbReference type="ChEBI" id="CHEBI:59789"/>
    </ligand>
</feature>
<feature type="binding site" evidence="1">
    <location>
        <begin position="117"/>
        <end position="118"/>
    </location>
    <ligand>
        <name>S-adenosyl-L-methionine</name>
        <dbReference type="ChEBI" id="CHEBI:59789"/>
    </ligand>
</feature>
<feature type="binding site" evidence="1">
    <location>
        <position position="174"/>
    </location>
    <ligand>
        <name>S-adenosyl-L-methionine</name>
        <dbReference type="ChEBI" id="CHEBI:59789"/>
    </ligand>
</feature>
<keyword id="KW-0963">Cytoplasm</keyword>
<keyword id="KW-0489">Methyltransferase</keyword>
<keyword id="KW-1185">Reference proteome</keyword>
<keyword id="KW-0698">rRNA processing</keyword>
<keyword id="KW-0949">S-adenosyl-L-methionine</keyword>
<keyword id="KW-0808">Transferase</keyword>